<keyword id="KW-0997">Cell inner membrane</keyword>
<keyword id="KW-1003">Cell membrane</keyword>
<keyword id="KW-0472">Membrane</keyword>
<keyword id="KW-0653">Protein transport</keyword>
<keyword id="KW-1185">Reference proteome</keyword>
<keyword id="KW-0811">Translocation</keyword>
<keyword id="KW-0812">Transmembrane</keyword>
<keyword id="KW-1133">Transmembrane helix</keyword>
<keyword id="KW-0813">Transport</keyword>
<protein>
    <recommendedName>
        <fullName evidence="1">Sec-independent protein translocase protein TatA</fullName>
    </recommendedName>
</protein>
<gene>
    <name evidence="1" type="primary">tatA</name>
    <name type="ordered locus">Veis_0701</name>
</gene>
<proteinExistence type="inferred from homology"/>
<sequence>MGTFSIWHWLIVLLVVVVVFGTKKLRNIGTDLGSAVKGFKDGMKDAATDTAPAGQVANQSTADQTIDVQTKPKG</sequence>
<organism>
    <name type="scientific">Verminephrobacter eiseniae (strain EF01-2)</name>
    <dbReference type="NCBI Taxonomy" id="391735"/>
    <lineage>
        <taxon>Bacteria</taxon>
        <taxon>Pseudomonadati</taxon>
        <taxon>Pseudomonadota</taxon>
        <taxon>Betaproteobacteria</taxon>
        <taxon>Burkholderiales</taxon>
        <taxon>Comamonadaceae</taxon>
        <taxon>Verminephrobacter</taxon>
    </lineage>
</organism>
<name>TATA_VEREI</name>
<accession>A1WFS6</accession>
<comment type="function">
    <text evidence="1">Part of the twin-arginine translocation (Tat) system that transports large folded proteins containing a characteristic twin-arginine motif in their signal peptide across membranes. TatA could form the protein-conducting channel of the Tat system.</text>
</comment>
<comment type="subunit">
    <text evidence="1">The Tat system comprises two distinct complexes: a TatABC complex, containing multiple copies of TatA, TatB and TatC subunits, and a separate TatA complex, containing only TatA subunits. Substrates initially bind to the TatABC complex, which probably triggers association of the separate TatA complex to form the active translocon.</text>
</comment>
<comment type="subcellular location">
    <subcellularLocation>
        <location evidence="1">Cell inner membrane</location>
        <topology evidence="1">Single-pass membrane protein</topology>
    </subcellularLocation>
</comment>
<comment type="similarity">
    <text evidence="1">Belongs to the TatA/E family.</text>
</comment>
<reference key="1">
    <citation type="submission" date="2006-12" db="EMBL/GenBank/DDBJ databases">
        <title>Complete sequence of chromosome 1 of Verminephrobacter eiseniae EF01-2.</title>
        <authorList>
            <person name="Copeland A."/>
            <person name="Lucas S."/>
            <person name="Lapidus A."/>
            <person name="Barry K."/>
            <person name="Detter J.C."/>
            <person name="Glavina del Rio T."/>
            <person name="Dalin E."/>
            <person name="Tice H."/>
            <person name="Pitluck S."/>
            <person name="Chertkov O."/>
            <person name="Brettin T."/>
            <person name="Bruce D."/>
            <person name="Han C."/>
            <person name="Tapia R."/>
            <person name="Gilna P."/>
            <person name="Schmutz J."/>
            <person name="Larimer F."/>
            <person name="Land M."/>
            <person name="Hauser L."/>
            <person name="Kyrpides N."/>
            <person name="Kim E."/>
            <person name="Stahl D."/>
            <person name="Richardson P."/>
        </authorList>
    </citation>
    <scope>NUCLEOTIDE SEQUENCE [LARGE SCALE GENOMIC DNA]</scope>
    <source>
        <strain>EF01-2</strain>
    </source>
</reference>
<feature type="chain" id="PRO_1000044456" description="Sec-independent protein translocase protein TatA">
    <location>
        <begin position="1"/>
        <end position="74"/>
    </location>
</feature>
<feature type="transmembrane region" description="Helical" evidence="1">
    <location>
        <begin position="1"/>
        <end position="21"/>
    </location>
</feature>
<feature type="region of interest" description="Disordered" evidence="2">
    <location>
        <begin position="50"/>
        <end position="74"/>
    </location>
</feature>
<feature type="compositionally biased region" description="Polar residues" evidence="2">
    <location>
        <begin position="56"/>
        <end position="68"/>
    </location>
</feature>
<evidence type="ECO:0000255" key="1">
    <source>
        <dbReference type="HAMAP-Rule" id="MF_00236"/>
    </source>
</evidence>
<evidence type="ECO:0000256" key="2">
    <source>
        <dbReference type="SAM" id="MobiDB-lite"/>
    </source>
</evidence>
<dbReference type="EMBL" id="CP000542">
    <property type="protein sequence ID" value="ABM56483.1"/>
    <property type="molecule type" value="Genomic_DNA"/>
</dbReference>
<dbReference type="RefSeq" id="WP_011808497.1">
    <property type="nucleotide sequence ID" value="NC_008786.1"/>
</dbReference>
<dbReference type="SMR" id="A1WFS6"/>
<dbReference type="STRING" id="391735.Veis_0701"/>
<dbReference type="GeneID" id="76459397"/>
<dbReference type="KEGG" id="vei:Veis_0701"/>
<dbReference type="eggNOG" id="COG1826">
    <property type="taxonomic scope" value="Bacteria"/>
</dbReference>
<dbReference type="HOGENOM" id="CLU_086034_5_1_4"/>
<dbReference type="OrthoDB" id="7066617at2"/>
<dbReference type="Proteomes" id="UP000000374">
    <property type="component" value="Chromosome"/>
</dbReference>
<dbReference type="GO" id="GO:0033281">
    <property type="term" value="C:TAT protein transport complex"/>
    <property type="evidence" value="ECO:0007669"/>
    <property type="project" value="UniProtKB-UniRule"/>
</dbReference>
<dbReference type="GO" id="GO:0008320">
    <property type="term" value="F:protein transmembrane transporter activity"/>
    <property type="evidence" value="ECO:0007669"/>
    <property type="project" value="UniProtKB-UniRule"/>
</dbReference>
<dbReference type="GO" id="GO:0043953">
    <property type="term" value="P:protein transport by the Tat complex"/>
    <property type="evidence" value="ECO:0007669"/>
    <property type="project" value="UniProtKB-UniRule"/>
</dbReference>
<dbReference type="Gene3D" id="1.20.5.3310">
    <property type="match status" value="1"/>
</dbReference>
<dbReference type="HAMAP" id="MF_00236">
    <property type="entry name" value="TatA_E"/>
    <property type="match status" value="1"/>
</dbReference>
<dbReference type="InterPro" id="IPR003369">
    <property type="entry name" value="TatA/B/E"/>
</dbReference>
<dbReference type="InterPro" id="IPR006312">
    <property type="entry name" value="TatA/E"/>
</dbReference>
<dbReference type="NCBIfam" id="NF002813">
    <property type="entry name" value="PRK02958.1"/>
    <property type="match status" value="1"/>
</dbReference>
<dbReference type="NCBIfam" id="TIGR01411">
    <property type="entry name" value="tatAE"/>
    <property type="match status" value="1"/>
</dbReference>
<dbReference type="PANTHER" id="PTHR42982">
    <property type="entry name" value="SEC-INDEPENDENT PROTEIN TRANSLOCASE PROTEIN TATA"/>
    <property type="match status" value="1"/>
</dbReference>
<dbReference type="PANTHER" id="PTHR42982:SF1">
    <property type="entry name" value="SEC-INDEPENDENT PROTEIN TRANSLOCASE PROTEIN TATA"/>
    <property type="match status" value="1"/>
</dbReference>
<dbReference type="Pfam" id="PF02416">
    <property type="entry name" value="TatA_B_E"/>
    <property type="match status" value="1"/>
</dbReference>